<sequence length="542" mass="56919">MAKIIAFDEEARRGLERGLNILADAVKVTLGPRGRNVVLEKKWGAPTITNDGVSIAKEIELEDPYEKIGAELVKEVAKKTDEVAGDGTTTATVLAQALVREGLRNVAAGADPLSLKRGIEKAVAAVTEQLLASAKEVETKEEIAATASISAADTQIGALIAEALDKVGKEGVITVEESNTFGLELELTEGMRFDKGYISQYFVTDAERQETVLEDPYILIVSSKISNVKDMVGILEKVMQSSKSLLIIAEDVETEALATLIVNKVRGLFKSVAVKAPGFGDRRKAQLADIAILTGGQVISEEVGLSLENATVDLLGQARKVVVTKDETTIVEGAGDAEQIAGRVAQIRAEIENTDSDYDREKLQERLAKLAGGVAVIKAGSATEVELKERKHRIEDAVRNAKAAVEEGIVPGGGVALIQAGVKAFETLQLEGDEATGANIVKVAIDAPLKQIAINAGLEPGVVVDKVRGLPVGHGLNAATGVYEDLLAAGVNDPVKVTRSALQNAASIAGLFLTTEVVVADKPQKNVPAAPGGDEMGGMGGF</sequence>
<name>CH601_RENSM</name>
<organism>
    <name type="scientific">Renibacterium salmoninarum (strain ATCC 33209 / DSM 20767 / JCM 11484 / NBRC 15589 / NCIMB 2235)</name>
    <dbReference type="NCBI Taxonomy" id="288705"/>
    <lineage>
        <taxon>Bacteria</taxon>
        <taxon>Bacillati</taxon>
        <taxon>Actinomycetota</taxon>
        <taxon>Actinomycetes</taxon>
        <taxon>Micrococcales</taxon>
        <taxon>Micrococcaceae</taxon>
        <taxon>Renibacterium</taxon>
    </lineage>
</organism>
<comment type="function">
    <text evidence="1">Together with its co-chaperonin GroES, plays an essential role in assisting protein folding. The GroEL-GroES system forms a nano-cage that allows encapsulation of the non-native substrate proteins and provides a physical environment optimized to promote and accelerate protein folding.</text>
</comment>
<comment type="catalytic activity">
    <reaction evidence="1">
        <text>ATP + H2O + a folded polypeptide = ADP + phosphate + an unfolded polypeptide.</text>
        <dbReference type="EC" id="5.6.1.7"/>
    </reaction>
</comment>
<comment type="subunit">
    <text evidence="1">Forms a cylinder of 14 subunits composed of two heptameric rings stacked back-to-back. Interacts with the co-chaperonin GroES.</text>
</comment>
<comment type="subcellular location">
    <subcellularLocation>
        <location evidence="1">Cytoplasm</location>
    </subcellularLocation>
</comment>
<comment type="similarity">
    <text evidence="1">Belongs to the chaperonin (HSP60) family.</text>
</comment>
<comment type="sequence caution" evidence="2">
    <conflict type="erroneous initiation">
        <sequence resource="EMBL-CDS" id="ABY22232"/>
    </conflict>
</comment>
<keyword id="KW-0067">ATP-binding</keyword>
<keyword id="KW-0143">Chaperone</keyword>
<keyword id="KW-0963">Cytoplasm</keyword>
<keyword id="KW-0413">Isomerase</keyword>
<keyword id="KW-0547">Nucleotide-binding</keyword>
<keyword id="KW-1185">Reference proteome</keyword>
<evidence type="ECO:0000255" key="1">
    <source>
        <dbReference type="HAMAP-Rule" id="MF_00600"/>
    </source>
</evidence>
<evidence type="ECO:0000305" key="2"/>
<protein>
    <recommendedName>
        <fullName evidence="1">Chaperonin GroEL 1</fullName>
        <ecNumber evidence="1">5.6.1.7</ecNumber>
    </recommendedName>
    <alternativeName>
        <fullName evidence="1">60 kDa chaperonin 1</fullName>
    </alternativeName>
    <alternativeName>
        <fullName evidence="1">Chaperonin-60 1</fullName>
        <shortName evidence="1">Cpn60 1</shortName>
    </alternativeName>
</protein>
<accession>A9WMA0</accession>
<dbReference type="EC" id="5.6.1.7" evidence="1"/>
<dbReference type="EMBL" id="CP000910">
    <property type="protein sequence ID" value="ABY22232.1"/>
    <property type="status" value="ALT_INIT"/>
    <property type="molecule type" value="Genomic_DNA"/>
</dbReference>
<dbReference type="RefSeq" id="WP_012243936.1">
    <property type="nucleotide sequence ID" value="NC_010168.1"/>
</dbReference>
<dbReference type="SMR" id="A9WMA0"/>
<dbReference type="STRING" id="288705.RSal33209_0482"/>
<dbReference type="KEGG" id="rsa:RSal33209_0482"/>
<dbReference type="eggNOG" id="COG0459">
    <property type="taxonomic scope" value="Bacteria"/>
</dbReference>
<dbReference type="HOGENOM" id="CLU_016503_3_0_11"/>
<dbReference type="Proteomes" id="UP000002007">
    <property type="component" value="Chromosome"/>
</dbReference>
<dbReference type="GO" id="GO:0005737">
    <property type="term" value="C:cytoplasm"/>
    <property type="evidence" value="ECO:0007669"/>
    <property type="project" value="UniProtKB-SubCell"/>
</dbReference>
<dbReference type="GO" id="GO:0005524">
    <property type="term" value="F:ATP binding"/>
    <property type="evidence" value="ECO:0007669"/>
    <property type="project" value="UniProtKB-UniRule"/>
</dbReference>
<dbReference type="GO" id="GO:0140662">
    <property type="term" value="F:ATP-dependent protein folding chaperone"/>
    <property type="evidence" value="ECO:0007669"/>
    <property type="project" value="InterPro"/>
</dbReference>
<dbReference type="GO" id="GO:0016853">
    <property type="term" value="F:isomerase activity"/>
    <property type="evidence" value="ECO:0007669"/>
    <property type="project" value="UniProtKB-KW"/>
</dbReference>
<dbReference type="GO" id="GO:0051082">
    <property type="term" value="F:unfolded protein binding"/>
    <property type="evidence" value="ECO:0007669"/>
    <property type="project" value="UniProtKB-UniRule"/>
</dbReference>
<dbReference type="GO" id="GO:0042026">
    <property type="term" value="P:protein refolding"/>
    <property type="evidence" value="ECO:0007669"/>
    <property type="project" value="UniProtKB-UniRule"/>
</dbReference>
<dbReference type="CDD" id="cd03344">
    <property type="entry name" value="GroEL"/>
    <property type="match status" value="1"/>
</dbReference>
<dbReference type="FunFam" id="3.50.7.10:FF:000001">
    <property type="entry name" value="60 kDa chaperonin"/>
    <property type="match status" value="1"/>
</dbReference>
<dbReference type="Gene3D" id="3.50.7.10">
    <property type="entry name" value="GroEL"/>
    <property type="match status" value="1"/>
</dbReference>
<dbReference type="Gene3D" id="1.10.560.10">
    <property type="entry name" value="GroEL-like equatorial domain"/>
    <property type="match status" value="1"/>
</dbReference>
<dbReference type="Gene3D" id="3.30.260.10">
    <property type="entry name" value="TCP-1-like chaperonin intermediate domain"/>
    <property type="match status" value="1"/>
</dbReference>
<dbReference type="HAMAP" id="MF_00600">
    <property type="entry name" value="CH60"/>
    <property type="match status" value="1"/>
</dbReference>
<dbReference type="InterPro" id="IPR018370">
    <property type="entry name" value="Chaperonin_Cpn60_CS"/>
</dbReference>
<dbReference type="InterPro" id="IPR001844">
    <property type="entry name" value="Cpn60/GroEL"/>
</dbReference>
<dbReference type="InterPro" id="IPR002423">
    <property type="entry name" value="Cpn60/GroEL/TCP-1"/>
</dbReference>
<dbReference type="InterPro" id="IPR027409">
    <property type="entry name" value="GroEL-like_apical_dom_sf"/>
</dbReference>
<dbReference type="InterPro" id="IPR027413">
    <property type="entry name" value="GROEL-like_equatorial_sf"/>
</dbReference>
<dbReference type="InterPro" id="IPR027410">
    <property type="entry name" value="TCP-1-like_intermed_sf"/>
</dbReference>
<dbReference type="NCBIfam" id="TIGR02348">
    <property type="entry name" value="GroEL"/>
    <property type="match status" value="1"/>
</dbReference>
<dbReference type="NCBIfam" id="NF000592">
    <property type="entry name" value="PRK00013.1"/>
    <property type="match status" value="1"/>
</dbReference>
<dbReference type="NCBIfam" id="NF009487">
    <property type="entry name" value="PRK12849.1"/>
    <property type="match status" value="1"/>
</dbReference>
<dbReference type="NCBIfam" id="NF009488">
    <property type="entry name" value="PRK12850.1"/>
    <property type="match status" value="1"/>
</dbReference>
<dbReference type="NCBIfam" id="NF009489">
    <property type="entry name" value="PRK12851.1"/>
    <property type="match status" value="1"/>
</dbReference>
<dbReference type="PANTHER" id="PTHR45633">
    <property type="entry name" value="60 KDA HEAT SHOCK PROTEIN, MITOCHONDRIAL"/>
    <property type="match status" value="1"/>
</dbReference>
<dbReference type="Pfam" id="PF00118">
    <property type="entry name" value="Cpn60_TCP1"/>
    <property type="match status" value="1"/>
</dbReference>
<dbReference type="PRINTS" id="PR00298">
    <property type="entry name" value="CHAPERONIN60"/>
</dbReference>
<dbReference type="SUPFAM" id="SSF52029">
    <property type="entry name" value="GroEL apical domain-like"/>
    <property type="match status" value="1"/>
</dbReference>
<dbReference type="SUPFAM" id="SSF48592">
    <property type="entry name" value="GroEL equatorial domain-like"/>
    <property type="match status" value="1"/>
</dbReference>
<dbReference type="SUPFAM" id="SSF54849">
    <property type="entry name" value="GroEL-intermediate domain like"/>
    <property type="match status" value="1"/>
</dbReference>
<dbReference type="PROSITE" id="PS00296">
    <property type="entry name" value="CHAPERONINS_CPN60"/>
    <property type="match status" value="1"/>
</dbReference>
<gene>
    <name evidence="1" type="primary">groEL1</name>
    <name evidence="1" type="synonym">groL1</name>
    <name type="ordered locus">RSal33209_0482</name>
</gene>
<feature type="chain" id="PRO_0000332054" description="Chaperonin GroEL 1">
    <location>
        <begin position="1"/>
        <end position="542"/>
    </location>
</feature>
<feature type="binding site" evidence="1">
    <location>
        <begin position="29"/>
        <end position="32"/>
    </location>
    <ligand>
        <name>ATP</name>
        <dbReference type="ChEBI" id="CHEBI:30616"/>
    </ligand>
</feature>
<feature type="binding site" evidence="1">
    <location>
        <begin position="86"/>
        <end position="90"/>
    </location>
    <ligand>
        <name>ATP</name>
        <dbReference type="ChEBI" id="CHEBI:30616"/>
    </ligand>
</feature>
<feature type="binding site" evidence="1">
    <location>
        <position position="413"/>
    </location>
    <ligand>
        <name>ATP</name>
        <dbReference type="ChEBI" id="CHEBI:30616"/>
    </ligand>
</feature>
<feature type="binding site" evidence="1">
    <location>
        <begin position="477"/>
        <end position="479"/>
    </location>
    <ligand>
        <name>ATP</name>
        <dbReference type="ChEBI" id="CHEBI:30616"/>
    </ligand>
</feature>
<feature type="binding site" evidence="1">
    <location>
        <position position="493"/>
    </location>
    <ligand>
        <name>ATP</name>
        <dbReference type="ChEBI" id="CHEBI:30616"/>
    </ligand>
</feature>
<reference key="1">
    <citation type="journal article" date="2008" name="J. Bacteriol.">
        <title>Genome sequence of the fish pathogen Renibacterium salmoninarum suggests reductive evolution away from an environmental Arthrobacter ancestor.</title>
        <authorList>
            <person name="Wiens G.D."/>
            <person name="Rockey D.D."/>
            <person name="Wu Z."/>
            <person name="Chang J."/>
            <person name="Levy R."/>
            <person name="Crane S."/>
            <person name="Chen D.S."/>
            <person name="Capri G.R."/>
            <person name="Burnett J.R."/>
            <person name="Sudheesh P.S."/>
            <person name="Schipma M.J."/>
            <person name="Burd H."/>
            <person name="Bhattacharyya A."/>
            <person name="Rhodes L.D."/>
            <person name="Kaul R."/>
            <person name="Strom M.S."/>
        </authorList>
    </citation>
    <scope>NUCLEOTIDE SEQUENCE [LARGE SCALE GENOMIC DNA]</scope>
    <source>
        <strain>ATCC 33209 / DSM 20767 / JCM 11484 / NBRC 15589 / NCIMB 2235</strain>
    </source>
</reference>
<proteinExistence type="inferred from homology"/>